<keyword id="KW-0285">Flavoprotein</keyword>
<keyword id="KW-0288">FMN</keyword>
<keyword id="KW-0637">Prenyltransferase</keyword>
<keyword id="KW-1185">Reference proteome</keyword>
<keyword id="KW-0808">Transferase</keyword>
<feature type="chain" id="PRO_0000134973" description="Flavin prenyltransferase UbiX">
    <location>
        <begin position="1"/>
        <end position="206"/>
    </location>
</feature>
<feature type="binding site" evidence="1">
    <location>
        <begin position="11"/>
        <end position="13"/>
    </location>
    <ligand>
        <name>FMN</name>
        <dbReference type="ChEBI" id="CHEBI:58210"/>
    </ligand>
</feature>
<feature type="binding site" evidence="1">
    <location>
        <position position="37"/>
    </location>
    <ligand>
        <name>FMN</name>
        <dbReference type="ChEBI" id="CHEBI:58210"/>
    </ligand>
</feature>
<feature type="binding site" evidence="1">
    <location>
        <begin position="103"/>
        <end position="106"/>
    </location>
    <ligand>
        <name>FMN</name>
        <dbReference type="ChEBI" id="CHEBI:58210"/>
    </ligand>
</feature>
<feature type="binding site" evidence="1">
    <location>
        <position position="138"/>
    </location>
    <ligand>
        <name>FMN</name>
        <dbReference type="ChEBI" id="CHEBI:58210"/>
    </ligand>
</feature>
<feature type="binding site" evidence="1">
    <location>
        <position position="168"/>
    </location>
    <ligand>
        <name>dimethylallyl phosphate</name>
        <dbReference type="ChEBI" id="CHEBI:88052"/>
    </ligand>
</feature>
<feature type="binding site" evidence="1">
    <location>
        <position position="184"/>
    </location>
    <ligand>
        <name>dimethylallyl phosphate</name>
        <dbReference type="ChEBI" id="CHEBI:88052"/>
    </ligand>
</feature>
<accession>P72743</accession>
<protein>
    <recommendedName>
        <fullName evidence="1">Flavin prenyltransferase UbiX</fullName>
        <ecNumber evidence="1">2.5.1.129</ecNumber>
    </recommendedName>
</protein>
<dbReference type="EC" id="2.5.1.129" evidence="1"/>
<dbReference type="EMBL" id="BA000022">
    <property type="protein sequence ID" value="BAA16758.1"/>
    <property type="molecule type" value="Genomic_DNA"/>
</dbReference>
<dbReference type="PIR" id="S74606">
    <property type="entry name" value="S74606"/>
</dbReference>
<dbReference type="SMR" id="P72743"/>
<dbReference type="FunCoup" id="P72743">
    <property type="interactions" value="184"/>
</dbReference>
<dbReference type="STRING" id="1148.gene:10497614"/>
<dbReference type="PaxDb" id="1148-1651831"/>
<dbReference type="EnsemblBacteria" id="BAA16758">
    <property type="protein sequence ID" value="BAA16758"/>
    <property type="gene ID" value="BAA16758"/>
</dbReference>
<dbReference type="KEGG" id="syn:slr1099"/>
<dbReference type="eggNOG" id="COG0163">
    <property type="taxonomic scope" value="Bacteria"/>
</dbReference>
<dbReference type="InParanoid" id="P72743"/>
<dbReference type="PhylomeDB" id="P72743"/>
<dbReference type="BioCyc" id="MetaCyc:MONOMER-18477"/>
<dbReference type="Proteomes" id="UP000001425">
    <property type="component" value="Chromosome"/>
</dbReference>
<dbReference type="GO" id="GO:0016831">
    <property type="term" value="F:carboxy-lyase activity"/>
    <property type="evidence" value="ECO:0000318"/>
    <property type="project" value="GO_Central"/>
</dbReference>
<dbReference type="GO" id="GO:0106141">
    <property type="term" value="F:flavin prenyltransferase activity"/>
    <property type="evidence" value="ECO:0007669"/>
    <property type="project" value="UniProtKB-EC"/>
</dbReference>
<dbReference type="FunFam" id="3.40.50.1950:FF:000001">
    <property type="entry name" value="Flavin prenyltransferase UbiX"/>
    <property type="match status" value="1"/>
</dbReference>
<dbReference type="Gene3D" id="3.40.50.1950">
    <property type="entry name" value="Flavin prenyltransferase-like"/>
    <property type="match status" value="1"/>
</dbReference>
<dbReference type="HAMAP" id="MF_01984">
    <property type="entry name" value="ubiX_pad"/>
    <property type="match status" value="1"/>
</dbReference>
<dbReference type="InterPro" id="IPR036551">
    <property type="entry name" value="Flavin_trans-like"/>
</dbReference>
<dbReference type="InterPro" id="IPR003382">
    <property type="entry name" value="Flavoprotein"/>
</dbReference>
<dbReference type="InterPro" id="IPR004507">
    <property type="entry name" value="UbiX-like"/>
</dbReference>
<dbReference type="NCBIfam" id="NF004685">
    <property type="entry name" value="PRK06029.1"/>
    <property type="match status" value="1"/>
</dbReference>
<dbReference type="NCBIfam" id="TIGR00421">
    <property type="entry name" value="ubiX_pad"/>
    <property type="match status" value="1"/>
</dbReference>
<dbReference type="PANTHER" id="PTHR43374">
    <property type="entry name" value="FLAVIN PRENYLTRANSFERASE"/>
    <property type="match status" value="1"/>
</dbReference>
<dbReference type="PANTHER" id="PTHR43374:SF1">
    <property type="entry name" value="FLAVIN PRENYLTRANSFERASE PAD1, MITOCHONDRIAL"/>
    <property type="match status" value="1"/>
</dbReference>
<dbReference type="Pfam" id="PF02441">
    <property type="entry name" value="Flavoprotein"/>
    <property type="match status" value="1"/>
</dbReference>
<dbReference type="SUPFAM" id="SSF52507">
    <property type="entry name" value="Homo-oligomeric flavin-containing Cys decarboxylases, HFCD"/>
    <property type="match status" value="1"/>
</dbReference>
<name>UBIX_SYNY3</name>
<proteinExistence type="inferred from homology"/>
<evidence type="ECO:0000255" key="1">
    <source>
        <dbReference type="HAMAP-Rule" id="MF_01984"/>
    </source>
</evidence>
<reference key="1">
    <citation type="journal article" date="1996" name="DNA Res.">
        <title>Sequence analysis of the genome of the unicellular cyanobacterium Synechocystis sp. strain PCC6803. II. Sequence determination of the entire genome and assignment of potential protein-coding regions.</title>
        <authorList>
            <person name="Kaneko T."/>
            <person name="Sato S."/>
            <person name="Kotani H."/>
            <person name="Tanaka A."/>
            <person name="Asamizu E."/>
            <person name="Nakamura Y."/>
            <person name="Miyajima N."/>
            <person name="Hirosawa M."/>
            <person name="Sugiura M."/>
            <person name="Sasamoto S."/>
            <person name="Kimura T."/>
            <person name="Hosouchi T."/>
            <person name="Matsuno A."/>
            <person name="Muraki A."/>
            <person name="Nakazaki N."/>
            <person name="Naruo K."/>
            <person name="Okumura S."/>
            <person name="Shimpo S."/>
            <person name="Takeuchi C."/>
            <person name="Wada T."/>
            <person name="Watanabe A."/>
            <person name="Yamada M."/>
            <person name="Yasuda M."/>
            <person name="Tabata S."/>
        </authorList>
    </citation>
    <scope>NUCLEOTIDE SEQUENCE [LARGE SCALE GENOMIC DNA]</scope>
    <source>
        <strain>ATCC 27184 / PCC 6803 / Kazusa</strain>
    </source>
</reference>
<gene>
    <name evidence="1" type="primary">ubiX</name>
    <name type="ordered locus">slr1099</name>
</gene>
<comment type="function">
    <text evidence="1">Flavin prenyltransferase that catalyzes the synthesis of the prenylated FMN cofactor (prenyl-FMN) for 4-hydroxy-3-polyprenylbenzoic acid decarboxylase UbiD. The prenyltransferase is metal-independent and links a dimethylallyl moiety from dimethylallyl monophosphate (DMAP) to the flavin N5 and C6 atoms of FMN.</text>
</comment>
<comment type="catalytic activity">
    <reaction evidence="1">
        <text>dimethylallyl phosphate + FMNH2 = prenylated FMNH2 + phosphate</text>
        <dbReference type="Rhea" id="RHEA:37743"/>
        <dbReference type="ChEBI" id="CHEBI:43474"/>
        <dbReference type="ChEBI" id="CHEBI:57618"/>
        <dbReference type="ChEBI" id="CHEBI:87467"/>
        <dbReference type="ChEBI" id="CHEBI:88052"/>
        <dbReference type="EC" id="2.5.1.129"/>
    </reaction>
</comment>
<comment type="similarity">
    <text evidence="1">Belongs to the UbiX/PAD1 family.</text>
</comment>
<organism>
    <name type="scientific">Synechocystis sp. (strain ATCC 27184 / PCC 6803 / Kazusa)</name>
    <dbReference type="NCBI Taxonomy" id="1111708"/>
    <lineage>
        <taxon>Bacteria</taxon>
        <taxon>Bacillati</taxon>
        <taxon>Cyanobacteriota</taxon>
        <taxon>Cyanophyceae</taxon>
        <taxon>Synechococcales</taxon>
        <taxon>Merismopediaceae</taxon>
        <taxon>Synechocystis</taxon>
    </lineage>
</organism>
<sequence length="206" mass="22173">MAQPLILGVSGASGLIYAVRAIKHLLAADYTIELVASRASYQVWQAEQNIQMPGEPSAQAEFWRSQAGVEKGGKLICHRWGDVGATIASGSYRCAGMVVLPCSMSTVAKLAVGMSSDLLERAADVQIKEGKPLVVVPRETPLSLIHLRNLTSLAEAGVRIVPAIPAWYHQPQSVEDLVDFVVARALDQLAIDCVPLQRWQGGMEGE</sequence>